<proteinExistence type="inferred from homology"/>
<keyword id="KW-0067">ATP-binding</keyword>
<keyword id="KW-0378">Hydrolase</keyword>
<keyword id="KW-0460">Magnesium</keyword>
<keyword id="KW-0479">Metal-binding</keyword>
<keyword id="KW-0511">Multifunctional enzyme</keyword>
<keyword id="KW-0533">Nickel</keyword>
<keyword id="KW-0547">Nucleotide-binding</keyword>
<keyword id="KW-0548">Nucleotidyltransferase</keyword>
<keyword id="KW-0692">RNA repair</keyword>
<keyword id="KW-0694">RNA-binding</keyword>
<keyword id="KW-0808">Transferase</keyword>
<keyword id="KW-0819">tRNA processing</keyword>
<gene>
    <name evidence="1" type="primary">cca</name>
    <name type="ordered locus">Ajs_0505</name>
</gene>
<reference key="1">
    <citation type="submission" date="2006-12" db="EMBL/GenBank/DDBJ databases">
        <title>Complete sequence of chromosome 1 of Acidovorax sp. JS42.</title>
        <authorList>
            <person name="Copeland A."/>
            <person name="Lucas S."/>
            <person name="Lapidus A."/>
            <person name="Barry K."/>
            <person name="Detter J.C."/>
            <person name="Glavina del Rio T."/>
            <person name="Dalin E."/>
            <person name="Tice H."/>
            <person name="Pitluck S."/>
            <person name="Chertkov O."/>
            <person name="Brettin T."/>
            <person name="Bruce D."/>
            <person name="Han C."/>
            <person name="Tapia R."/>
            <person name="Gilna P."/>
            <person name="Schmutz J."/>
            <person name="Larimer F."/>
            <person name="Land M."/>
            <person name="Hauser L."/>
            <person name="Kyrpides N."/>
            <person name="Kim E."/>
            <person name="Stahl D."/>
            <person name="Richardson P."/>
        </authorList>
    </citation>
    <scope>NUCLEOTIDE SEQUENCE [LARGE SCALE GENOMIC DNA]</scope>
    <source>
        <strain>JS42</strain>
    </source>
</reference>
<organism>
    <name type="scientific">Acidovorax sp. (strain JS42)</name>
    <dbReference type="NCBI Taxonomy" id="232721"/>
    <lineage>
        <taxon>Bacteria</taxon>
        <taxon>Pseudomonadati</taxon>
        <taxon>Pseudomonadota</taxon>
        <taxon>Betaproteobacteria</taxon>
        <taxon>Burkholderiales</taxon>
        <taxon>Comamonadaceae</taxon>
        <taxon>Acidovorax</taxon>
    </lineage>
</organism>
<dbReference type="EC" id="2.7.7.72" evidence="1"/>
<dbReference type="EC" id="3.1.3.-" evidence="1"/>
<dbReference type="EC" id="3.1.4.-" evidence="1"/>
<dbReference type="EMBL" id="CP000539">
    <property type="protein sequence ID" value="ABM40755.1"/>
    <property type="molecule type" value="Genomic_DNA"/>
</dbReference>
<dbReference type="SMR" id="A1W3D0"/>
<dbReference type="STRING" id="232721.Ajs_0505"/>
<dbReference type="KEGG" id="ajs:Ajs_0505"/>
<dbReference type="eggNOG" id="COG0617">
    <property type="taxonomic scope" value="Bacteria"/>
</dbReference>
<dbReference type="HOGENOM" id="CLU_015961_1_1_4"/>
<dbReference type="Proteomes" id="UP000000645">
    <property type="component" value="Chromosome"/>
</dbReference>
<dbReference type="GO" id="GO:0005524">
    <property type="term" value="F:ATP binding"/>
    <property type="evidence" value="ECO:0007669"/>
    <property type="project" value="UniProtKB-UniRule"/>
</dbReference>
<dbReference type="GO" id="GO:0004810">
    <property type="term" value="F:CCA tRNA nucleotidyltransferase activity"/>
    <property type="evidence" value="ECO:0007669"/>
    <property type="project" value="UniProtKB-UniRule"/>
</dbReference>
<dbReference type="GO" id="GO:0004112">
    <property type="term" value="F:cyclic-nucleotide phosphodiesterase activity"/>
    <property type="evidence" value="ECO:0007669"/>
    <property type="project" value="UniProtKB-UniRule"/>
</dbReference>
<dbReference type="GO" id="GO:0000287">
    <property type="term" value="F:magnesium ion binding"/>
    <property type="evidence" value="ECO:0007669"/>
    <property type="project" value="UniProtKB-UniRule"/>
</dbReference>
<dbReference type="GO" id="GO:0016791">
    <property type="term" value="F:phosphatase activity"/>
    <property type="evidence" value="ECO:0007669"/>
    <property type="project" value="UniProtKB-UniRule"/>
</dbReference>
<dbReference type="GO" id="GO:0000049">
    <property type="term" value="F:tRNA binding"/>
    <property type="evidence" value="ECO:0007669"/>
    <property type="project" value="UniProtKB-UniRule"/>
</dbReference>
<dbReference type="GO" id="GO:0042245">
    <property type="term" value="P:RNA repair"/>
    <property type="evidence" value="ECO:0007669"/>
    <property type="project" value="UniProtKB-KW"/>
</dbReference>
<dbReference type="GO" id="GO:0001680">
    <property type="term" value="P:tRNA 3'-terminal CCA addition"/>
    <property type="evidence" value="ECO:0007669"/>
    <property type="project" value="UniProtKB-UniRule"/>
</dbReference>
<dbReference type="CDD" id="cd00077">
    <property type="entry name" value="HDc"/>
    <property type="match status" value="1"/>
</dbReference>
<dbReference type="CDD" id="cd05398">
    <property type="entry name" value="NT_ClassII-CCAase"/>
    <property type="match status" value="1"/>
</dbReference>
<dbReference type="Gene3D" id="3.30.460.10">
    <property type="entry name" value="Beta Polymerase, domain 2"/>
    <property type="match status" value="1"/>
</dbReference>
<dbReference type="Gene3D" id="1.10.3090.10">
    <property type="entry name" value="cca-adding enzyme, domain 2"/>
    <property type="match status" value="1"/>
</dbReference>
<dbReference type="HAMAP" id="MF_01261">
    <property type="entry name" value="CCA_bact_type1"/>
    <property type="match status" value="1"/>
</dbReference>
<dbReference type="HAMAP" id="MF_01262">
    <property type="entry name" value="CCA_bact_type2"/>
    <property type="match status" value="1"/>
</dbReference>
<dbReference type="InterPro" id="IPR012006">
    <property type="entry name" value="CCA_bact"/>
</dbReference>
<dbReference type="InterPro" id="IPR003607">
    <property type="entry name" value="HD/PDEase_dom"/>
</dbReference>
<dbReference type="InterPro" id="IPR006674">
    <property type="entry name" value="HD_domain"/>
</dbReference>
<dbReference type="InterPro" id="IPR043519">
    <property type="entry name" value="NT_sf"/>
</dbReference>
<dbReference type="InterPro" id="IPR002646">
    <property type="entry name" value="PolA_pol_head_dom"/>
</dbReference>
<dbReference type="InterPro" id="IPR032828">
    <property type="entry name" value="PolyA_RNA-bd"/>
</dbReference>
<dbReference type="InterPro" id="IPR050124">
    <property type="entry name" value="tRNA_CCA-adding_enzyme"/>
</dbReference>
<dbReference type="NCBIfam" id="NF008137">
    <property type="entry name" value="PRK10885.1"/>
    <property type="match status" value="1"/>
</dbReference>
<dbReference type="PANTHER" id="PTHR47545">
    <property type="entry name" value="MULTIFUNCTIONAL CCA PROTEIN"/>
    <property type="match status" value="1"/>
</dbReference>
<dbReference type="PANTHER" id="PTHR47545:SF1">
    <property type="entry name" value="MULTIFUNCTIONAL CCA PROTEIN"/>
    <property type="match status" value="1"/>
</dbReference>
<dbReference type="Pfam" id="PF01966">
    <property type="entry name" value="HD"/>
    <property type="match status" value="1"/>
</dbReference>
<dbReference type="Pfam" id="PF01743">
    <property type="entry name" value="PolyA_pol"/>
    <property type="match status" value="1"/>
</dbReference>
<dbReference type="Pfam" id="PF12627">
    <property type="entry name" value="PolyA_pol_RNAbd"/>
    <property type="match status" value="1"/>
</dbReference>
<dbReference type="PIRSF" id="PIRSF000813">
    <property type="entry name" value="CCA_bact"/>
    <property type="match status" value="1"/>
</dbReference>
<dbReference type="SUPFAM" id="SSF81301">
    <property type="entry name" value="Nucleotidyltransferase"/>
    <property type="match status" value="1"/>
</dbReference>
<dbReference type="SUPFAM" id="SSF81891">
    <property type="entry name" value="Poly A polymerase C-terminal region-like"/>
    <property type="match status" value="1"/>
</dbReference>
<dbReference type="PROSITE" id="PS51831">
    <property type="entry name" value="HD"/>
    <property type="match status" value="1"/>
</dbReference>
<comment type="function">
    <text evidence="1">Catalyzes the addition and repair of the essential 3'-terminal CCA sequence in tRNAs without using a nucleic acid template. Adds these three nucleotides in the order of C, C, and A to the tRNA nucleotide-73, using CTP and ATP as substrates and producing inorganic pyrophosphate. tRNA 3'-terminal CCA addition is required both for tRNA processing and repair. Also involved in tRNA surveillance by mediating tandem CCA addition to generate a CCACCA at the 3' terminus of unstable tRNAs. While stable tRNAs receive only 3'-terminal CCA, unstable tRNAs are marked with CCACCA and rapidly degraded.</text>
</comment>
<comment type="catalytic activity">
    <reaction evidence="1">
        <text>a tRNA precursor + 2 CTP + ATP = a tRNA with a 3' CCA end + 3 diphosphate</text>
        <dbReference type="Rhea" id="RHEA:14433"/>
        <dbReference type="Rhea" id="RHEA-COMP:10465"/>
        <dbReference type="Rhea" id="RHEA-COMP:10468"/>
        <dbReference type="ChEBI" id="CHEBI:30616"/>
        <dbReference type="ChEBI" id="CHEBI:33019"/>
        <dbReference type="ChEBI" id="CHEBI:37563"/>
        <dbReference type="ChEBI" id="CHEBI:74896"/>
        <dbReference type="ChEBI" id="CHEBI:83071"/>
        <dbReference type="EC" id="2.7.7.72"/>
    </reaction>
</comment>
<comment type="catalytic activity">
    <reaction evidence="1">
        <text>a tRNA with a 3' CCA end + 2 CTP + ATP = a tRNA with a 3' CCACCA end + 3 diphosphate</text>
        <dbReference type="Rhea" id="RHEA:76235"/>
        <dbReference type="Rhea" id="RHEA-COMP:10468"/>
        <dbReference type="Rhea" id="RHEA-COMP:18655"/>
        <dbReference type="ChEBI" id="CHEBI:30616"/>
        <dbReference type="ChEBI" id="CHEBI:33019"/>
        <dbReference type="ChEBI" id="CHEBI:37563"/>
        <dbReference type="ChEBI" id="CHEBI:83071"/>
        <dbReference type="ChEBI" id="CHEBI:195187"/>
    </reaction>
    <physiologicalReaction direction="left-to-right" evidence="1">
        <dbReference type="Rhea" id="RHEA:76236"/>
    </physiologicalReaction>
</comment>
<comment type="cofactor">
    <cofactor evidence="1">
        <name>Mg(2+)</name>
        <dbReference type="ChEBI" id="CHEBI:18420"/>
    </cofactor>
    <text evidence="1">Magnesium is required for nucleotidyltransferase activity.</text>
</comment>
<comment type="cofactor">
    <cofactor evidence="1">
        <name>Ni(2+)</name>
        <dbReference type="ChEBI" id="CHEBI:49786"/>
    </cofactor>
    <text evidence="1">Nickel for phosphatase activity.</text>
</comment>
<comment type="subunit">
    <text evidence="1">Monomer. Can also form homodimers and oligomers.</text>
</comment>
<comment type="domain">
    <text evidence="1">Comprises two domains: an N-terminal domain containing the nucleotidyltransferase activity and a C-terminal HD domain associated with both phosphodiesterase and phosphatase activities.</text>
</comment>
<comment type="miscellaneous">
    <text evidence="1">A single active site specifically recognizes both ATP and CTP and is responsible for their addition.</text>
</comment>
<comment type="similarity">
    <text evidence="1">Belongs to the tRNA nucleotidyltransferase/poly(A) polymerase family. Bacterial CCA-adding enzyme type 1 subfamily.</text>
</comment>
<accession>A1W3D0</accession>
<sequence length="425" mass="47023">MQIYMVGGAVRDRLLGRPVNDHDWVVVGATPDDMVARGYLPVGRDFPVFLHPETREEYALARTERKSGRGYRGFVVQTSPDVTLEEDLSRRDLTINAIAASAAWTGAEDLFDPYGGARDLQARVLRHVTDSFREDPVRILRVARFAARFTDFTVAPETMQLMREMVHDGEADHLVPERVWQELARGLMEPQPSRMFDVLRDCGALAVVLPEVERLWGVPQRPEYHPEVDTGVHLMMVLDMAAHLQAPLTVRFACLTHDLGKGTTPHDVLPRHIGHEQRSARLLKAVCERLRVPVECRELADVVAREHGNIHRSGDLGAAALVRLLERCDAIRKPARLDEILLACECDARGRLGFADRPYPQRARINAALAAVQSVTTSSVAAHAAQLGLSGPKVGEMIHAARVQAVADWLHATAQPAPEPQGNAG</sequence>
<feature type="chain" id="PRO_1000054242" description="Multifunctional CCA protein">
    <location>
        <begin position="1"/>
        <end position="425"/>
    </location>
</feature>
<feature type="domain" description="HD" evidence="1">
    <location>
        <begin position="230"/>
        <end position="331"/>
    </location>
</feature>
<feature type="binding site" evidence="1">
    <location>
        <position position="8"/>
    </location>
    <ligand>
        <name>ATP</name>
        <dbReference type="ChEBI" id="CHEBI:30616"/>
    </ligand>
</feature>
<feature type="binding site" evidence="1">
    <location>
        <position position="8"/>
    </location>
    <ligand>
        <name>CTP</name>
        <dbReference type="ChEBI" id="CHEBI:37563"/>
    </ligand>
</feature>
<feature type="binding site" evidence="1">
    <location>
        <position position="11"/>
    </location>
    <ligand>
        <name>ATP</name>
        <dbReference type="ChEBI" id="CHEBI:30616"/>
    </ligand>
</feature>
<feature type="binding site" evidence="1">
    <location>
        <position position="11"/>
    </location>
    <ligand>
        <name>CTP</name>
        <dbReference type="ChEBI" id="CHEBI:37563"/>
    </ligand>
</feature>
<feature type="binding site" evidence="1">
    <location>
        <position position="21"/>
    </location>
    <ligand>
        <name>Mg(2+)</name>
        <dbReference type="ChEBI" id="CHEBI:18420"/>
    </ligand>
</feature>
<feature type="binding site" evidence="1">
    <location>
        <position position="23"/>
    </location>
    <ligand>
        <name>Mg(2+)</name>
        <dbReference type="ChEBI" id="CHEBI:18420"/>
    </ligand>
</feature>
<feature type="binding site" evidence="1">
    <location>
        <position position="91"/>
    </location>
    <ligand>
        <name>ATP</name>
        <dbReference type="ChEBI" id="CHEBI:30616"/>
    </ligand>
</feature>
<feature type="binding site" evidence="1">
    <location>
        <position position="91"/>
    </location>
    <ligand>
        <name>CTP</name>
        <dbReference type="ChEBI" id="CHEBI:37563"/>
    </ligand>
</feature>
<feature type="binding site" evidence="1">
    <location>
        <position position="141"/>
    </location>
    <ligand>
        <name>ATP</name>
        <dbReference type="ChEBI" id="CHEBI:30616"/>
    </ligand>
</feature>
<feature type="binding site" evidence="1">
    <location>
        <position position="141"/>
    </location>
    <ligand>
        <name>CTP</name>
        <dbReference type="ChEBI" id="CHEBI:37563"/>
    </ligand>
</feature>
<feature type="binding site" evidence="1">
    <location>
        <position position="144"/>
    </location>
    <ligand>
        <name>ATP</name>
        <dbReference type="ChEBI" id="CHEBI:30616"/>
    </ligand>
</feature>
<feature type="binding site" evidence="1">
    <location>
        <position position="144"/>
    </location>
    <ligand>
        <name>CTP</name>
        <dbReference type="ChEBI" id="CHEBI:37563"/>
    </ligand>
</feature>
<protein>
    <recommendedName>
        <fullName evidence="1">Multifunctional CCA protein</fullName>
    </recommendedName>
    <domain>
        <recommendedName>
            <fullName evidence="1">CCA-adding enzyme</fullName>
            <ecNumber evidence="1">2.7.7.72</ecNumber>
        </recommendedName>
        <alternativeName>
            <fullName evidence="1">CCA tRNA nucleotidyltransferase</fullName>
        </alternativeName>
        <alternativeName>
            <fullName evidence="1">tRNA CCA-pyrophosphorylase</fullName>
        </alternativeName>
        <alternativeName>
            <fullName evidence="1">tRNA adenylyl-/cytidylyl-transferase</fullName>
        </alternativeName>
        <alternativeName>
            <fullName evidence="1">tRNA nucleotidyltransferase</fullName>
        </alternativeName>
        <alternativeName>
            <fullName evidence="1">tRNA-NT</fullName>
        </alternativeName>
    </domain>
    <domain>
        <recommendedName>
            <fullName evidence="1">2'-nucleotidase</fullName>
            <ecNumber evidence="1">3.1.3.-</ecNumber>
        </recommendedName>
    </domain>
    <domain>
        <recommendedName>
            <fullName evidence="1">2',3'-cyclic phosphodiesterase</fullName>
            <ecNumber evidence="1">3.1.4.-</ecNumber>
        </recommendedName>
    </domain>
    <domain>
        <recommendedName>
            <fullName evidence="1">Phosphatase</fullName>
            <ecNumber evidence="1">3.1.3.-</ecNumber>
        </recommendedName>
    </domain>
</protein>
<name>CCA_ACISJ</name>
<evidence type="ECO:0000255" key="1">
    <source>
        <dbReference type="HAMAP-Rule" id="MF_01261"/>
    </source>
</evidence>